<dbReference type="EC" id="1.1.1.267" evidence="1"/>
<dbReference type="EMBL" id="CP001022">
    <property type="protein sequence ID" value="ACB61297.1"/>
    <property type="molecule type" value="Genomic_DNA"/>
</dbReference>
<dbReference type="RefSeq" id="WP_012370715.1">
    <property type="nucleotide sequence ID" value="NC_010556.1"/>
</dbReference>
<dbReference type="SMR" id="B1YI70"/>
<dbReference type="STRING" id="262543.Exig_1845"/>
<dbReference type="KEGG" id="esi:Exig_1845"/>
<dbReference type="eggNOG" id="COG0743">
    <property type="taxonomic scope" value="Bacteria"/>
</dbReference>
<dbReference type="HOGENOM" id="CLU_035714_4_0_9"/>
<dbReference type="OrthoDB" id="9806546at2"/>
<dbReference type="UniPathway" id="UPA00056">
    <property type="reaction ID" value="UER00092"/>
</dbReference>
<dbReference type="Proteomes" id="UP000001681">
    <property type="component" value="Chromosome"/>
</dbReference>
<dbReference type="GO" id="GO:0030604">
    <property type="term" value="F:1-deoxy-D-xylulose-5-phosphate reductoisomerase activity"/>
    <property type="evidence" value="ECO:0007669"/>
    <property type="project" value="UniProtKB-UniRule"/>
</dbReference>
<dbReference type="GO" id="GO:0030145">
    <property type="term" value="F:manganese ion binding"/>
    <property type="evidence" value="ECO:0007669"/>
    <property type="project" value="TreeGrafter"/>
</dbReference>
<dbReference type="GO" id="GO:0070402">
    <property type="term" value="F:NADPH binding"/>
    <property type="evidence" value="ECO:0007669"/>
    <property type="project" value="InterPro"/>
</dbReference>
<dbReference type="GO" id="GO:0051484">
    <property type="term" value="P:isopentenyl diphosphate biosynthetic process, methylerythritol 4-phosphate pathway involved in terpenoid biosynthetic process"/>
    <property type="evidence" value="ECO:0007669"/>
    <property type="project" value="TreeGrafter"/>
</dbReference>
<dbReference type="FunFam" id="3.40.50.720:FF:000045">
    <property type="entry name" value="1-deoxy-D-xylulose 5-phosphate reductoisomerase"/>
    <property type="match status" value="1"/>
</dbReference>
<dbReference type="Gene3D" id="1.10.1740.10">
    <property type="match status" value="1"/>
</dbReference>
<dbReference type="Gene3D" id="3.40.50.720">
    <property type="entry name" value="NAD(P)-binding Rossmann-like Domain"/>
    <property type="match status" value="1"/>
</dbReference>
<dbReference type="HAMAP" id="MF_00183">
    <property type="entry name" value="DXP_reductoisom"/>
    <property type="match status" value="1"/>
</dbReference>
<dbReference type="InterPro" id="IPR003821">
    <property type="entry name" value="DXP_reductoisomerase"/>
</dbReference>
<dbReference type="InterPro" id="IPR013644">
    <property type="entry name" value="DXP_reductoisomerase_C"/>
</dbReference>
<dbReference type="InterPro" id="IPR013512">
    <property type="entry name" value="DXP_reductoisomerase_N"/>
</dbReference>
<dbReference type="InterPro" id="IPR026877">
    <property type="entry name" value="DXPR_C"/>
</dbReference>
<dbReference type="InterPro" id="IPR036169">
    <property type="entry name" value="DXPR_C_sf"/>
</dbReference>
<dbReference type="InterPro" id="IPR036291">
    <property type="entry name" value="NAD(P)-bd_dom_sf"/>
</dbReference>
<dbReference type="NCBIfam" id="TIGR00243">
    <property type="entry name" value="Dxr"/>
    <property type="match status" value="1"/>
</dbReference>
<dbReference type="NCBIfam" id="NF009114">
    <property type="entry name" value="PRK12464.1"/>
    <property type="match status" value="1"/>
</dbReference>
<dbReference type="PANTHER" id="PTHR30525">
    <property type="entry name" value="1-DEOXY-D-XYLULOSE 5-PHOSPHATE REDUCTOISOMERASE"/>
    <property type="match status" value="1"/>
</dbReference>
<dbReference type="PANTHER" id="PTHR30525:SF0">
    <property type="entry name" value="1-DEOXY-D-XYLULOSE 5-PHOSPHATE REDUCTOISOMERASE, CHLOROPLASTIC"/>
    <property type="match status" value="1"/>
</dbReference>
<dbReference type="Pfam" id="PF08436">
    <property type="entry name" value="DXP_redisom_C"/>
    <property type="match status" value="1"/>
</dbReference>
<dbReference type="Pfam" id="PF02670">
    <property type="entry name" value="DXP_reductoisom"/>
    <property type="match status" value="1"/>
</dbReference>
<dbReference type="Pfam" id="PF13288">
    <property type="entry name" value="DXPR_C"/>
    <property type="match status" value="1"/>
</dbReference>
<dbReference type="PIRSF" id="PIRSF006205">
    <property type="entry name" value="Dxp_reductismrs"/>
    <property type="match status" value="1"/>
</dbReference>
<dbReference type="SUPFAM" id="SSF69055">
    <property type="entry name" value="1-deoxy-D-xylulose-5-phosphate reductoisomerase, C-terminal domain"/>
    <property type="match status" value="1"/>
</dbReference>
<dbReference type="SUPFAM" id="SSF55347">
    <property type="entry name" value="Glyceraldehyde-3-phosphate dehydrogenase-like, C-terminal domain"/>
    <property type="match status" value="1"/>
</dbReference>
<dbReference type="SUPFAM" id="SSF51735">
    <property type="entry name" value="NAD(P)-binding Rossmann-fold domains"/>
    <property type="match status" value="1"/>
</dbReference>
<comment type="function">
    <text evidence="1">Catalyzes the NADPH-dependent rearrangement and reduction of 1-deoxy-D-xylulose-5-phosphate (DXP) to 2-C-methyl-D-erythritol 4-phosphate (MEP).</text>
</comment>
<comment type="catalytic activity">
    <reaction evidence="1">
        <text>2-C-methyl-D-erythritol 4-phosphate + NADP(+) = 1-deoxy-D-xylulose 5-phosphate + NADPH + H(+)</text>
        <dbReference type="Rhea" id="RHEA:13717"/>
        <dbReference type="ChEBI" id="CHEBI:15378"/>
        <dbReference type="ChEBI" id="CHEBI:57783"/>
        <dbReference type="ChEBI" id="CHEBI:57792"/>
        <dbReference type="ChEBI" id="CHEBI:58262"/>
        <dbReference type="ChEBI" id="CHEBI:58349"/>
        <dbReference type="EC" id="1.1.1.267"/>
    </reaction>
    <physiologicalReaction direction="right-to-left" evidence="1">
        <dbReference type="Rhea" id="RHEA:13719"/>
    </physiologicalReaction>
</comment>
<comment type="cofactor">
    <cofactor evidence="1">
        <name>Mg(2+)</name>
        <dbReference type="ChEBI" id="CHEBI:18420"/>
    </cofactor>
    <cofactor evidence="1">
        <name>Mn(2+)</name>
        <dbReference type="ChEBI" id="CHEBI:29035"/>
    </cofactor>
</comment>
<comment type="pathway">
    <text evidence="1">Isoprenoid biosynthesis; isopentenyl diphosphate biosynthesis via DXP pathway; isopentenyl diphosphate from 1-deoxy-D-xylulose 5-phosphate: step 1/6.</text>
</comment>
<comment type="similarity">
    <text evidence="1">Belongs to the DXR family.</text>
</comment>
<organism>
    <name type="scientific">Exiguobacterium sibiricum (strain DSM 17290 / CCUG 55495 / CIP 109462 / JCM 13490 / 255-15)</name>
    <dbReference type="NCBI Taxonomy" id="262543"/>
    <lineage>
        <taxon>Bacteria</taxon>
        <taxon>Bacillati</taxon>
        <taxon>Bacillota</taxon>
        <taxon>Bacilli</taxon>
        <taxon>Bacillales</taxon>
        <taxon>Bacillales Family XII. Incertae Sedis</taxon>
        <taxon>Exiguobacterium</taxon>
    </lineage>
</organism>
<evidence type="ECO:0000255" key="1">
    <source>
        <dbReference type="HAMAP-Rule" id="MF_00183"/>
    </source>
</evidence>
<keyword id="KW-0414">Isoprene biosynthesis</keyword>
<keyword id="KW-0464">Manganese</keyword>
<keyword id="KW-0479">Metal-binding</keyword>
<keyword id="KW-0521">NADP</keyword>
<keyword id="KW-0560">Oxidoreductase</keyword>
<keyword id="KW-1185">Reference proteome</keyword>
<accession>B1YI70</accession>
<proteinExistence type="inferred from homology"/>
<feature type="chain" id="PRO_1000098495" description="1-deoxy-D-xylulose 5-phosphate reductoisomerase">
    <location>
        <begin position="1"/>
        <end position="384"/>
    </location>
</feature>
<feature type="binding site" evidence="1">
    <location>
        <position position="10"/>
    </location>
    <ligand>
        <name>NADPH</name>
        <dbReference type="ChEBI" id="CHEBI:57783"/>
    </ligand>
</feature>
<feature type="binding site" evidence="1">
    <location>
        <position position="11"/>
    </location>
    <ligand>
        <name>NADPH</name>
        <dbReference type="ChEBI" id="CHEBI:57783"/>
    </ligand>
</feature>
<feature type="binding site" evidence="1">
    <location>
        <position position="12"/>
    </location>
    <ligand>
        <name>NADPH</name>
        <dbReference type="ChEBI" id="CHEBI:57783"/>
    </ligand>
</feature>
<feature type="binding site" evidence="1">
    <location>
        <position position="13"/>
    </location>
    <ligand>
        <name>NADPH</name>
        <dbReference type="ChEBI" id="CHEBI:57783"/>
    </ligand>
</feature>
<feature type="binding site" evidence="1">
    <location>
        <position position="36"/>
    </location>
    <ligand>
        <name>NADPH</name>
        <dbReference type="ChEBI" id="CHEBI:57783"/>
    </ligand>
</feature>
<feature type="binding site" evidence="1">
    <location>
        <position position="37"/>
    </location>
    <ligand>
        <name>NADPH</name>
        <dbReference type="ChEBI" id="CHEBI:57783"/>
    </ligand>
</feature>
<feature type="binding site" evidence="1">
    <location>
        <position position="38"/>
    </location>
    <ligand>
        <name>NADPH</name>
        <dbReference type="ChEBI" id="CHEBI:57783"/>
    </ligand>
</feature>
<feature type="binding site" evidence="1">
    <location>
        <position position="121"/>
    </location>
    <ligand>
        <name>NADPH</name>
        <dbReference type="ChEBI" id="CHEBI:57783"/>
    </ligand>
</feature>
<feature type="binding site" evidence="1">
    <location>
        <position position="122"/>
    </location>
    <ligand>
        <name>1-deoxy-D-xylulose 5-phosphate</name>
        <dbReference type="ChEBI" id="CHEBI:57792"/>
    </ligand>
</feature>
<feature type="binding site" evidence="1">
    <location>
        <position position="123"/>
    </location>
    <ligand>
        <name>NADPH</name>
        <dbReference type="ChEBI" id="CHEBI:57783"/>
    </ligand>
</feature>
<feature type="binding site" evidence="1">
    <location>
        <position position="147"/>
    </location>
    <ligand>
        <name>Mn(2+)</name>
        <dbReference type="ChEBI" id="CHEBI:29035"/>
    </ligand>
</feature>
<feature type="binding site" evidence="1">
    <location>
        <position position="148"/>
    </location>
    <ligand>
        <name>1-deoxy-D-xylulose 5-phosphate</name>
        <dbReference type="ChEBI" id="CHEBI:57792"/>
    </ligand>
</feature>
<feature type="binding site" evidence="1">
    <location>
        <position position="149"/>
    </location>
    <ligand>
        <name>1-deoxy-D-xylulose 5-phosphate</name>
        <dbReference type="ChEBI" id="CHEBI:57792"/>
    </ligand>
</feature>
<feature type="binding site" evidence="1">
    <location>
        <position position="149"/>
    </location>
    <ligand>
        <name>Mn(2+)</name>
        <dbReference type="ChEBI" id="CHEBI:29035"/>
    </ligand>
</feature>
<feature type="binding site" evidence="1">
    <location>
        <position position="173"/>
    </location>
    <ligand>
        <name>1-deoxy-D-xylulose 5-phosphate</name>
        <dbReference type="ChEBI" id="CHEBI:57792"/>
    </ligand>
</feature>
<feature type="binding site" evidence="1">
    <location>
        <position position="196"/>
    </location>
    <ligand>
        <name>1-deoxy-D-xylulose 5-phosphate</name>
        <dbReference type="ChEBI" id="CHEBI:57792"/>
    </ligand>
</feature>
<feature type="binding site" evidence="1">
    <location>
        <position position="202"/>
    </location>
    <ligand>
        <name>NADPH</name>
        <dbReference type="ChEBI" id="CHEBI:57783"/>
    </ligand>
</feature>
<feature type="binding site" evidence="1">
    <location>
        <position position="209"/>
    </location>
    <ligand>
        <name>1-deoxy-D-xylulose 5-phosphate</name>
        <dbReference type="ChEBI" id="CHEBI:57792"/>
    </ligand>
</feature>
<feature type="binding site" evidence="1">
    <location>
        <position position="214"/>
    </location>
    <ligand>
        <name>1-deoxy-D-xylulose 5-phosphate</name>
        <dbReference type="ChEBI" id="CHEBI:57792"/>
    </ligand>
</feature>
<feature type="binding site" evidence="1">
    <location>
        <position position="215"/>
    </location>
    <ligand>
        <name>1-deoxy-D-xylulose 5-phosphate</name>
        <dbReference type="ChEBI" id="CHEBI:57792"/>
    </ligand>
</feature>
<feature type="binding site" evidence="1">
    <location>
        <position position="218"/>
    </location>
    <ligand>
        <name>1-deoxy-D-xylulose 5-phosphate</name>
        <dbReference type="ChEBI" id="CHEBI:57792"/>
    </ligand>
</feature>
<feature type="binding site" evidence="1">
    <location>
        <position position="218"/>
    </location>
    <ligand>
        <name>Mn(2+)</name>
        <dbReference type="ChEBI" id="CHEBI:29035"/>
    </ligand>
</feature>
<protein>
    <recommendedName>
        <fullName evidence="1">1-deoxy-D-xylulose 5-phosphate reductoisomerase</fullName>
        <shortName evidence="1">DXP reductoisomerase</shortName>
        <ecNumber evidence="1">1.1.1.267</ecNumber>
    </recommendedName>
    <alternativeName>
        <fullName evidence="1">1-deoxyxylulose-5-phosphate reductoisomerase</fullName>
    </alternativeName>
    <alternativeName>
        <fullName evidence="1">2-C-methyl-D-erythritol 4-phosphate synthase</fullName>
    </alternativeName>
</protein>
<gene>
    <name evidence="1" type="primary">dxr</name>
    <name type="ordered locus">Exig_1845</name>
</gene>
<name>DXR_EXIS2</name>
<sequence>MKQVSIIGGTGSIGTQTLDVIAANPDRFQLVSFAFGKNIEVALPWLNRLRPELVAVLDETVKEQLEAVLDYSPTVLVGEDGLIAVATADQADIVITAVVGAVGLRPTLAAIEAGKSIGLANKETLVTAGHLVMKKAREKGVAILPVDSEHAAIFQCLNGERRQDVRQIILTASGGSFRDQTREQLANVTVEQALNHPNWSMGAKITIDSATMMNKGFEVIEAHWLFDVTYDEIDVVLHRESIIHSMVEFNDGAVMAQLGMPDMREPIQYALTYPSRLEIKGGERLNLKQIGRLNFAEASFERYPLLRLAFEAGRAGGSMPSVLNAANEQAVDRFLKGEISFLEIEASVEAALQAHENIEDPSLDQILESDRWARAFVASLSLAN</sequence>
<reference key="1">
    <citation type="submission" date="2008-04" db="EMBL/GenBank/DDBJ databases">
        <title>Complete sequence of chromosome of Exiguobacterium sibiricum 255-15.</title>
        <authorList>
            <consortium name="US DOE Joint Genome Institute"/>
            <person name="Copeland A."/>
            <person name="Lucas S."/>
            <person name="Lapidus A."/>
            <person name="Glavina del Rio T."/>
            <person name="Dalin E."/>
            <person name="Tice H."/>
            <person name="Bruce D."/>
            <person name="Goodwin L."/>
            <person name="Pitluck S."/>
            <person name="Kiss H."/>
            <person name="Chertkov O."/>
            <person name="Monk C."/>
            <person name="Brettin T."/>
            <person name="Detter J.C."/>
            <person name="Han C."/>
            <person name="Kuske C.R."/>
            <person name="Schmutz J."/>
            <person name="Larimer F."/>
            <person name="Land M."/>
            <person name="Hauser L."/>
            <person name="Kyrpides N."/>
            <person name="Mikhailova N."/>
            <person name="Vishnivetskaya T."/>
            <person name="Rodrigues D.F."/>
            <person name="Gilichinsky D."/>
            <person name="Tiedje J."/>
            <person name="Richardson P."/>
        </authorList>
    </citation>
    <scope>NUCLEOTIDE SEQUENCE [LARGE SCALE GENOMIC DNA]</scope>
    <source>
        <strain>DSM 17290 / CCUG 55495 / CIP 109462 / JCM 13490 / 255-15</strain>
    </source>
</reference>